<proteinExistence type="inferred from homology"/>
<evidence type="ECO:0000255" key="1">
    <source>
        <dbReference type="HAMAP-Rule" id="MF_01379"/>
    </source>
</evidence>
<evidence type="ECO:0000305" key="2"/>
<reference key="1">
    <citation type="journal article" date="2007" name="PLoS Genet.">
        <title>Patterns and implications of gene gain and loss in the evolution of Prochlorococcus.</title>
        <authorList>
            <person name="Kettler G.C."/>
            <person name="Martiny A.C."/>
            <person name="Huang K."/>
            <person name="Zucker J."/>
            <person name="Coleman M.L."/>
            <person name="Rodrigue S."/>
            <person name="Chen F."/>
            <person name="Lapidus A."/>
            <person name="Ferriera S."/>
            <person name="Johnson J."/>
            <person name="Steglich C."/>
            <person name="Church G.M."/>
            <person name="Richardson P."/>
            <person name="Chisholm S.W."/>
        </authorList>
    </citation>
    <scope>NUCLEOTIDE SEQUENCE [LARGE SCALE GENOMIC DNA]</scope>
    <source>
        <strain>AS9601</strain>
    </source>
</reference>
<comment type="function">
    <text evidence="1">Photosystem II (PSII) is a light-driven water:plastoquinone oxidoreductase that uses light energy to abstract electrons from H(2)O, generating O(2) and a proton gradient subsequently used for ATP formation. It consists of a core antenna complex that captures photons, and an electron transfer chain that converts photonic excitation into a charge separation. The D1/D2 (PsbA/PsbD) reaction center heterodimer binds P680, the primary electron donor of PSII as well as several subsequent electron acceptors.</text>
</comment>
<comment type="catalytic activity">
    <reaction evidence="1">
        <text>2 a plastoquinone + 4 hnu + 2 H2O = 2 a plastoquinol + O2</text>
        <dbReference type="Rhea" id="RHEA:36359"/>
        <dbReference type="Rhea" id="RHEA-COMP:9561"/>
        <dbReference type="Rhea" id="RHEA-COMP:9562"/>
        <dbReference type="ChEBI" id="CHEBI:15377"/>
        <dbReference type="ChEBI" id="CHEBI:15379"/>
        <dbReference type="ChEBI" id="CHEBI:17757"/>
        <dbReference type="ChEBI" id="CHEBI:30212"/>
        <dbReference type="ChEBI" id="CHEBI:62192"/>
        <dbReference type="EC" id="1.10.3.9"/>
    </reaction>
</comment>
<comment type="cofactor">
    <text evidence="1">The D1/D2 heterodimer binds P680, chlorophylls that are the primary electron donor of PSII, and subsequent electron acceptors. It shares a non-heme iron and each subunit binds pheophytin, quinone, additional chlorophylls, carotenoids and lipids. D1 provides most of the ligands for the Mn4-Ca-O5 cluster of the oxygen-evolving complex (OEC). There is also a Cl(-1) ion associated with D1 and D2, which is required for oxygen evolution. The PSII complex binds additional chlorophylls, carotenoids and specific lipids.</text>
</comment>
<comment type="subunit">
    <text evidence="2">PSII is composed of 1 copy each of membrane proteins PsbA, PsbB, PsbC, PsbD, PsbE, PsbF, PsbH, PsbI, PsbJ, PsbK, PsbL, PsbM, PsbT, PsbX, PsbY, Psb30/Ycf12, peripheral proteins PsbO, CyanoQ (PsbQ), PsbU, PsbV and a large number of cofactors. It forms dimeric complexes.</text>
</comment>
<comment type="subcellular location">
    <subcellularLocation>
        <location evidence="1">Cellular thylakoid membrane</location>
        <topology evidence="1">Multi-pass membrane protein</topology>
    </subcellularLocation>
</comment>
<comment type="PTM">
    <text evidence="1">Tyr-162 forms a radical intermediate that is referred to as redox-active TyrZ, YZ or Y-Z.</text>
</comment>
<comment type="PTM">
    <text evidence="1">C-terminally processed by CtpA; processing is essential to allow assembly of the oxygen-evolving complex and thus photosynthetic growth.</text>
</comment>
<comment type="miscellaneous">
    <text evidence="1">Cyanobacteria usually contain more than 2 copies of the psbA gene.</text>
</comment>
<comment type="miscellaneous">
    <text evidence="1">2 of the reaction center chlorophylls (ChlD1 and ChlD2) are entirely coordinated by water.</text>
</comment>
<comment type="miscellaneous">
    <text evidence="1">Herbicides such as atrazine, BNT, diuron or ioxynil bind in the Q(B) binding site and block subsequent electron transfer.</text>
</comment>
<comment type="similarity">
    <text evidence="1">Belongs to the reaction center PufL/M/PsbA/D family.</text>
</comment>
<sequence>MTTIQQQRSSLLKGWPQFCEWVTSTNNRIYVGWFGVLMIPCLLTAAACFIVAFIAAPPVDIDGIREPVAGSFLYGNNIISGAVVPSSNAIGLHFYPIWEAATVDEWLYNGGPYQLVIFHFLIGISAYMGRQWELSYRLGMRPWICVAYSAPVSAAFAVFLVYPFGQGSFSDGMPLGISGTFNFMFVFQAEHNILMHPFHMAGVAGMFGGSLFSAMHGSLVTSSLIRETTETESQNYGYKFGQEEETYNIVAAHGYFGRLIFQYASFNNSRSLHFFLAVFPVVCVWLTSMGICTMAFNLNGFNFNQSVVDANGKIVPTWGDVLNRANLGMEVMHERNAHNFPLDLAAAESTTVALSAPAIG</sequence>
<accession>A2BP21</accession>
<keyword id="KW-0106">Calcium</keyword>
<keyword id="KW-0148">Chlorophyll</keyword>
<keyword id="KW-0157">Chromophore</keyword>
<keyword id="KW-0249">Electron transport</keyword>
<keyword id="KW-0359">Herbicide resistance</keyword>
<keyword id="KW-0408">Iron</keyword>
<keyword id="KW-0460">Magnesium</keyword>
<keyword id="KW-0464">Manganese</keyword>
<keyword id="KW-0472">Membrane</keyword>
<keyword id="KW-0479">Metal-binding</keyword>
<keyword id="KW-0560">Oxidoreductase</keyword>
<keyword id="KW-0602">Photosynthesis</keyword>
<keyword id="KW-0604">Photosystem II</keyword>
<keyword id="KW-0793">Thylakoid</keyword>
<keyword id="KW-0812">Transmembrane</keyword>
<keyword id="KW-1133">Transmembrane helix</keyword>
<keyword id="KW-0813">Transport</keyword>
<gene>
    <name evidence="1 2" type="primary">psbA1</name>
    <name type="ordered locus">A9601_02441</name>
</gene>
<gene>
    <name evidence="1 2" type="primary">psbA2</name>
    <name type="ordered locus">A9601_12521</name>
</gene>
<name>PSBA_PROMS</name>
<dbReference type="EC" id="1.10.3.9" evidence="1"/>
<dbReference type="EMBL" id="CP000551">
    <property type="protein sequence ID" value="ABM69532.1"/>
    <property type="molecule type" value="Genomic_DNA"/>
</dbReference>
<dbReference type="EMBL" id="CP000551">
    <property type="protein sequence ID" value="ABM70536.1"/>
    <property type="molecule type" value="Genomic_DNA"/>
</dbReference>
<dbReference type="SMR" id="A2BP21"/>
<dbReference type="STRING" id="146891.A9601_02441"/>
<dbReference type="KEGG" id="pmb:A9601_02441"/>
<dbReference type="KEGG" id="pmb:A9601_12521"/>
<dbReference type="eggNOG" id="ENOG502Z87P">
    <property type="taxonomic scope" value="Bacteria"/>
</dbReference>
<dbReference type="HOGENOM" id="CLU_054206_1_0_3"/>
<dbReference type="OrthoDB" id="505356at2"/>
<dbReference type="Proteomes" id="UP000002590">
    <property type="component" value="Chromosome"/>
</dbReference>
<dbReference type="GO" id="GO:0009523">
    <property type="term" value="C:photosystem II"/>
    <property type="evidence" value="ECO:0007669"/>
    <property type="project" value="UniProtKB-KW"/>
</dbReference>
<dbReference type="GO" id="GO:0031676">
    <property type="term" value="C:plasma membrane-derived thylakoid membrane"/>
    <property type="evidence" value="ECO:0007669"/>
    <property type="project" value="UniProtKB-SubCell"/>
</dbReference>
<dbReference type="GO" id="GO:0016168">
    <property type="term" value="F:chlorophyll binding"/>
    <property type="evidence" value="ECO:0007669"/>
    <property type="project" value="UniProtKB-UniRule"/>
</dbReference>
<dbReference type="GO" id="GO:0045156">
    <property type="term" value="F:electron transporter, transferring electrons within the cyclic electron transport pathway of photosynthesis activity"/>
    <property type="evidence" value="ECO:0007669"/>
    <property type="project" value="InterPro"/>
</dbReference>
<dbReference type="GO" id="GO:0005506">
    <property type="term" value="F:iron ion binding"/>
    <property type="evidence" value="ECO:0007669"/>
    <property type="project" value="UniProtKB-UniRule"/>
</dbReference>
<dbReference type="GO" id="GO:0016682">
    <property type="term" value="F:oxidoreductase activity, acting on diphenols and related substances as donors, oxygen as acceptor"/>
    <property type="evidence" value="ECO:0007669"/>
    <property type="project" value="UniProtKB-UniRule"/>
</dbReference>
<dbReference type="GO" id="GO:0010242">
    <property type="term" value="F:oxygen evolving activity"/>
    <property type="evidence" value="ECO:0007669"/>
    <property type="project" value="UniProtKB-EC"/>
</dbReference>
<dbReference type="GO" id="GO:0009772">
    <property type="term" value="P:photosynthetic electron transport in photosystem II"/>
    <property type="evidence" value="ECO:0007669"/>
    <property type="project" value="InterPro"/>
</dbReference>
<dbReference type="GO" id="GO:0009635">
    <property type="term" value="P:response to herbicide"/>
    <property type="evidence" value="ECO:0007669"/>
    <property type="project" value="UniProtKB-KW"/>
</dbReference>
<dbReference type="FunFam" id="1.20.85.10:FF:000002">
    <property type="entry name" value="Photosystem II protein D1"/>
    <property type="match status" value="1"/>
</dbReference>
<dbReference type="Gene3D" id="1.20.85.10">
    <property type="entry name" value="Photosystem II protein D1-like"/>
    <property type="match status" value="1"/>
</dbReference>
<dbReference type="HAMAP" id="MF_01379">
    <property type="entry name" value="PSII_PsbA_D1"/>
    <property type="match status" value="1"/>
</dbReference>
<dbReference type="InterPro" id="IPR055266">
    <property type="entry name" value="D1/D2"/>
</dbReference>
<dbReference type="InterPro" id="IPR036854">
    <property type="entry name" value="Photo_II_D1/D2_sf"/>
</dbReference>
<dbReference type="InterPro" id="IPR000484">
    <property type="entry name" value="Photo_RC_L/M"/>
</dbReference>
<dbReference type="InterPro" id="IPR055265">
    <property type="entry name" value="Photo_RC_L/M_CS"/>
</dbReference>
<dbReference type="InterPro" id="IPR005867">
    <property type="entry name" value="PSII_D1"/>
</dbReference>
<dbReference type="NCBIfam" id="TIGR01151">
    <property type="entry name" value="psbA"/>
    <property type="match status" value="1"/>
</dbReference>
<dbReference type="PANTHER" id="PTHR33149:SF12">
    <property type="entry name" value="PHOTOSYSTEM II D2 PROTEIN"/>
    <property type="match status" value="1"/>
</dbReference>
<dbReference type="PANTHER" id="PTHR33149">
    <property type="entry name" value="PHOTOSYSTEM II PROTEIN D1"/>
    <property type="match status" value="1"/>
</dbReference>
<dbReference type="Pfam" id="PF00124">
    <property type="entry name" value="Photo_RC"/>
    <property type="match status" value="1"/>
</dbReference>
<dbReference type="PRINTS" id="PR00256">
    <property type="entry name" value="REACTNCENTRE"/>
</dbReference>
<dbReference type="SUPFAM" id="SSF81483">
    <property type="entry name" value="Bacterial photosystem II reaction centre, L and M subunits"/>
    <property type="match status" value="1"/>
</dbReference>
<dbReference type="PROSITE" id="PS00244">
    <property type="entry name" value="REACTION_CENTER"/>
    <property type="match status" value="1"/>
</dbReference>
<organism>
    <name type="scientific">Prochlorococcus marinus (strain AS9601)</name>
    <dbReference type="NCBI Taxonomy" id="146891"/>
    <lineage>
        <taxon>Bacteria</taxon>
        <taxon>Bacillati</taxon>
        <taxon>Cyanobacteriota</taxon>
        <taxon>Cyanophyceae</taxon>
        <taxon>Synechococcales</taxon>
        <taxon>Prochlorococcaceae</taxon>
        <taxon>Prochlorococcus</taxon>
    </lineage>
</organism>
<feature type="chain" id="PRO_0000316355" description="Photosystem II protein D1" evidence="1">
    <location>
        <begin position="1"/>
        <end position="345"/>
    </location>
</feature>
<feature type="propeptide" id="PRO_0000316356" evidence="1">
    <location>
        <begin position="346"/>
        <end position="360"/>
    </location>
</feature>
<feature type="transmembrane region" description="Helical" evidence="1">
    <location>
        <begin position="30"/>
        <end position="47"/>
    </location>
</feature>
<feature type="transmembrane region" description="Helical" evidence="1">
    <location>
        <begin position="119"/>
        <end position="134"/>
    </location>
</feature>
<feature type="transmembrane region" description="Helical" evidence="1">
    <location>
        <begin position="143"/>
        <end position="157"/>
    </location>
</feature>
<feature type="transmembrane region" description="Helical" evidence="1">
    <location>
        <begin position="198"/>
        <end position="219"/>
    </location>
</feature>
<feature type="transmembrane region" description="Helical" evidence="1">
    <location>
        <begin position="275"/>
        <end position="289"/>
    </location>
</feature>
<feature type="binding site" description="axial binding residue" evidence="1">
    <location>
        <position position="119"/>
    </location>
    <ligand>
        <name>chlorophyll a</name>
        <dbReference type="ChEBI" id="CHEBI:58416"/>
        <label>ChlzD1</label>
    </ligand>
    <ligandPart>
        <name>Mg</name>
        <dbReference type="ChEBI" id="CHEBI:25107"/>
    </ligandPart>
</feature>
<feature type="binding site" evidence="1">
    <location>
        <position position="127"/>
    </location>
    <ligand>
        <name>pheophytin a</name>
        <dbReference type="ChEBI" id="CHEBI:136840"/>
        <label>D1</label>
    </ligand>
</feature>
<feature type="binding site" evidence="1">
    <location>
        <position position="171"/>
    </location>
    <ligand>
        <name>[CaMn4O5] cluster</name>
        <dbReference type="ChEBI" id="CHEBI:189552"/>
    </ligand>
</feature>
<feature type="binding site" evidence="1">
    <location>
        <position position="190"/>
    </location>
    <ligand>
        <name>[CaMn4O5] cluster</name>
        <dbReference type="ChEBI" id="CHEBI:189552"/>
    </ligand>
</feature>
<feature type="binding site" description="axial binding residue" evidence="1">
    <location>
        <position position="199"/>
    </location>
    <ligand>
        <name>chlorophyll a</name>
        <dbReference type="ChEBI" id="CHEBI:58416"/>
        <label>PD1</label>
    </ligand>
    <ligandPart>
        <name>Mg</name>
        <dbReference type="ChEBI" id="CHEBI:25107"/>
    </ligandPart>
</feature>
<feature type="binding site" evidence="1">
    <location>
        <position position="216"/>
    </location>
    <ligand>
        <name>a quinone</name>
        <dbReference type="ChEBI" id="CHEBI:132124"/>
        <label>B</label>
    </ligand>
</feature>
<feature type="binding site" evidence="1">
    <location>
        <position position="216"/>
    </location>
    <ligand>
        <name>Fe cation</name>
        <dbReference type="ChEBI" id="CHEBI:24875"/>
        <note>ligand shared with heterodimeric partner</note>
    </ligand>
</feature>
<feature type="binding site" evidence="1">
    <location>
        <begin position="265"/>
        <end position="266"/>
    </location>
    <ligand>
        <name>a quinone</name>
        <dbReference type="ChEBI" id="CHEBI:132124"/>
        <label>B</label>
    </ligand>
</feature>
<feature type="binding site" evidence="1">
    <location>
        <position position="273"/>
    </location>
    <ligand>
        <name>Fe cation</name>
        <dbReference type="ChEBI" id="CHEBI:24875"/>
        <note>ligand shared with heterodimeric partner</note>
    </ligand>
</feature>
<feature type="binding site" evidence="1">
    <location>
        <position position="333"/>
    </location>
    <ligand>
        <name>[CaMn4O5] cluster</name>
        <dbReference type="ChEBI" id="CHEBI:189552"/>
    </ligand>
</feature>
<feature type="binding site" evidence="1">
    <location>
        <position position="334"/>
    </location>
    <ligand>
        <name>[CaMn4O5] cluster</name>
        <dbReference type="ChEBI" id="CHEBI:189552"/>
    </ligand>
</feature>
<feature type="binding site" evidence="1">
    <location>
        <position position="343"/>
    </location>
    <ligand>
        <name>[CaMn4O5] cluster</name>
        <dbReference type="ChEBI" id="CHEBI:189552"/>
    </ligand>
</feature>
<feature type="binding site" evidence="1">
    <location>
        <position position="345"/>
    </location>
    <ligand>
        <name>[CaMn4O5] cluster</name>
        <dbReference type="ChEBI" id="CHEBI:189552"/>
    </ligand>
</feature>
<feature type="site" description="Tyrosine radical intermediate" evidence="1">
    <location>
        <position position="162"/>
    </location>
</feature>
<feature type="site" description="Stabilizes free radical intermediate" evidence="1">
    <location>
        <position position="191"/>
    </location>
</feature>
<feature type="site" description="Cleavage; by CtpA" evidence="1">
    <location>
        <begin position="345"/>
        <end position="346"/>
    </location>
</feature>
<protein>
    <recommendedName>
        <fullName evidence="1">Photosystem II protein D1</fullName>
        <shortName evidence="1">PSII D1 protein</shortName>
        <ecNumber evidence="1">1.10.3.9</ecNumber>
    </recommendedName>
    <alternativeName>
        <fullName evidence="1">Photosystem II Q(B) protein</fullName>
    </alternativeName>
</protein>